<evidence type="ECO:0000255" key="1">
    <source>
        <dbReference type="HAMAP-Rule" id="MF_00164"/>
    </source>
</evidence>
<gene>
    <name evidence="1" type="primary">glmS</name>
    <name type="ordered locus">Cj1366c</name>
</gene>
<protein>
    <recommendedName>
        <fullName evidence="1">Glutamine--fructose-6-phosphate aminotransferase [isomerizing]</fullName>
        <ecNumber evidence="1">2.6.1.16</ecNumber>
    </recommendedName>
    <alternativeName>
        <fullName evidence="1">D-fructose-6-phosphate amidotransferase</fullName>
    </alternativeName>
    <alternativeName>
        <fullName evidence="1">GFAT</fullName>
    </alternativeName>
    <alternativeName>
        <fullName evidence="1">Glucosamine-6-phosphate synthase</fullName>
    </alternativeName>
    <alternativeName>
        <fullName evidence="1">Hexosephosphate aminotransferase</fullName>
    </alternativeName>
    <alternativeName>
        <fullName evidence="1">L-glutamine--D-fructose-6-phosphate amidotransferase</fullName>
    </alternativeName>
</protein>
<organism>
    <name type="scientific">Campylobacter jejuni subsp. jejuni serotype O:2 (strain ATCC 700819 / NCTC 11168)</name>
    <dbReference type="NCBI Taxonomy" id="192222"/>
    <lineage>
        <taxon>Bacteria</taxon>
        <taxon>Pseudomonadati</taxon>
        <taxon>Campylobacterota</taxon>
        <taxon>Epsilonproteobacteria</taxon>
        <taxon>Campylobacterales</taxon>
        <taxon>Campylobacteraceae</taxon>
        <taxon>Campylobacter</taxon>
    </lineage>
</organism>
<dbReference type="EC" id="2.6.1.16" evidence="1"/>
<dbReference type="EMBL" id="AL111168">
    <property type="protein sequence ID" value="CAL35478.1"/>
    <property type="molecule type" value="Genomic_DNA"/>
</dbReference>
<dbReference type="PIR" id="C81281">
    <property type="entry name" value="C81281"/>
</dbReference>
<dbReference type="RefSeq" id="WP_002858421.1">
    <property type="nucleotide sequence ID" value="NZ_SZUC01000003.1"/>
</dbReference>
<dbReference type="RefSeq" id="YP_002344754.1">
    <property type="nucleotide sequence ID" value="NC_002163.1"/>
</dbReference>
<dbReference type="SMR" id="Q9PMT4"/>
<dbReference type="IntAct" id="Q9PMT4">
    <property type="interactions" value="29"/>
</dbReference>
<dbReference type="STRING" id="192222.Cj1366c"/>
<dbReference type="MEROPS" id="C44.A08"/>
<dbReference type="PaxDb" id="192222-Cj1366c"/>
<dbReference type="EnsemblBacteria" id="CAL35478">
    <property type="protein sequence ID" value="CAL35478"/>
    <property type="gene ID" value="Cj1366c"/>
</dbReference>
<dbReference type="GeneID" id="905659"/>
<dbReference type="KEGG" id="cje:Cj1366c"/>
<dbReference type="PATRIC" id="fig|192222.6.peg.1347"/>
<dbReference type="eggNOG" id="COG0449">
    <property type="taxonomic scope" value="Bacteria"/>
</dbReference>
<dbReference type="HOGENOM" id="CLU_012520_5_2_7"/>
<dbReference type="OrthoDB" id="9761808at2"/>
<dbReference type="Proteomes" id="UP000000799">
    <property type="component" value="Chromosome"/>
</dbReference>
<dbReference type="GO" id="GO:0005829">
    <property type="term" value="C:cytosol"/>
    <property type="evidence" value="ECO:0007669"/>
    <property type="project" value="TreeGrafter"/>
</dbReference>
<dbReference type="GO" id="GO:0097367">
    <property type="term" value="F:carbohydrate derivative binding"/>
    <property type="evidence" value="ECO:0007669"/>
    <property type="project" value="InterPro"/>
</dbReference>
<dbReference type="GO" id="GO:0004360">
    <property type="term" value="F:glutamine-fructose-6-phosphate transaminase (isomerizing) activity"/>
    <property type="evidence" value="ECO:0007669"/>
    <property type="project" value="UniProtKB-UniRule"/>
</dbReference>
<dbReference type="GO" id="GO:0005975">
    <property type="term" value="P:carbohydrate metabolic process"/>
    <property type="evidence" value="ECO:0007669"/>
    <property type="project" value="UniProtKB-UniRule"/>
</dbReference>
<dbReference type="GO" id="GO:0006002">
    <property type="term" value="P:fructose 6-phosphate metabolic process"/>
    <property type="evidence" value="ECO:0007669"/>
    <property type="project" value="TreeGrafter"/>
</dbReference>
<dbReference type="GO" id="GO:0006487">
    <property type="term" value="P:protein N-linked glycosylation"/>
    <property type="evidence" value="ECO:0007669"/>
    <property type="project" value="TreeGrafter"/>
</dbReference>
<dbReference type="GO" id="GO:0006047">
    <property type="term" value="P:UDP-N-acetylglucosamine metabolic process"/>
    <property type="evidence" value="ECO:0007669"/>
    <property type="project" value="TreeGrafter"/>
</dbReference>
<dbReference type="CDD" id="cd00714">
    <property type="entry name" value="GFAT"/>
    <property type="match status" value="1"/>
</dbReference>
<dbReference type="CDD" id="cd05008">
    <property type="entry name" value="SIS_GlmS_GlmD_1"/>
    <property type="match status" value="1"/>
</dbReference>
<dbReference type="CDD" id="cd05009">
    <property type="entry name" value="SIS_GlmS_GlmD_2"/>
    <property type="match status" value="1"/>
</dbReference>
<dbReference type="FunFam" id="3.40.50.10490:FF:000001">
    <property type="entry name" value="Glutamine--fructose-6-phosphate aminotransferase [isomerizing]"/>
    <property type="match status" value="1"/>
</dbReference>
<dbReference type="Gene3D" id="3.40.50.10490">
    <property type="entry name" value="Glucose-6-phosphate isomerase like protein, domain 1"/>
    <property type="match status" value="2"/>
</dbReference>
<dbReference type="Gene3D" id="3.60.20.10">
    <property type="entry name" value="Glutamine Phosphoribosylpyrophosphate, subunit 1, domain 1"/>
    <property type="match status" value="1"/>
</dbReference>
<dbReference type="HAMAP" id="MF_00164">
    <property type="entry name" value="GlmS"/>
    <property type="match status" value="1"/>
</dbReference>
<dbReference type="InterPro" id="IPR017932">
    <property type="entry name" value="GATase_2_dom"/>
</dbReference>
<dbReference type="InterPro" id="IPR005855">
    <property type="entry name" value="GFAT"/>
</dbReference>
<dbReference type="InterPro" id="IPR047084">
    <property type="entry name" value="GFAT_N"/>
</dbReference>
<dbReference type="InterPro" id="IPR035466">
    <property type="entry name" value="GlmS/AgaS_SIS"/>
</dbReference>
<dbReference type="InterPro" id="IPR035490">
    <property type="entry name" value="GlmS/FrlB_SIS"/>
</dbReference>
<dbReference type="InterPro" id="IPR029055">
    <property type="entry name" value="Ntn_hydrolases_N"/>
</dbReference>
<dbReference type="InterPro" id="IPR001347">
    <property type="entry name" value="SIS_dom"/>
</dbReference>
<dbReference type="InterPro" id="IPR046348">
    <property type="entry name" value="SIS_dom_sf"/>
</dbReference>
<dbReference type="NCBIfam" id="TIGR01135">
    <property type="entry name" value="glmS"/>
    <property type="match status" value="1"/>
</dbReference>
<dbReference type="NCBIfam" id="NF001484">
    <property type="entry name" value="PRK00331.1"/>
    <property type="match status" value="1"/>
</dbReference>
<dbReference type="PANTHER" id="PTHR10937">
    <property type="entry name" value="GLUCOSAMINE--FRUCTOSE-6-PHOSPHATE AMINOTRANSFERASE, ISOMERIZING"/>
    <property type="match status" value="1"/>
</dbReference>
<dbReference type="PANTHER" id="PTHR10937:SF0">
    <property type="entry name" value="GLUTAMINE--FRUCTOSE-6-PHOSPHATE TRANSAMINASE (ISOMERIZING)"/>
    <property type="match status" value="1"/>
</dbReference>
<dbReference type="Pfam" id="PF13522">
    <property type="entry name" value="GATase_6"/>
    <property type="match status" value="1"/>
</dbReference>
<dbReference type="Pfam" id="PF01380">
    <property type="entry name" value="SIS"/>
    <property type="match status" value="2"/>
</dbReference>
<dbReference type="SUPFAM" id="SSF56235">
    <property type="entry name" value="N-terminal nucleophile aminohydrolases (Ntn hydrolases)"/>
    <property type="match status" value="1"/>
</dbReference>
<dbReference type="SUPFAM" id="SSF53697">
    <property type="entry name" value="SIS domain"/>
    <property type="match status" value="1"/>
</dbReference>
<dbReference type="PROSITE" id="PS51278">
    <property type="entry name" value="GATASE_TYPE_2"/>
    <property type="match status" value="1"/>
</dbReference>
<dbReference type="PROSITE" id="PS51464">
    <property type="entry name" value="SIS"/>
    <property type="match status" value="2"/>
</dbReference>
<reference key="1">
    <citation type="journal article" date="2000" name="Nature">
        <title>The genome sequence of the food-borne pathogen Campylobacter jejuni reveals hypervariable sequences.</title>
        <authorList>
            <person name="Parkhill J."/>
            <person name="Wren B.W."/>
            <person name="Mungall K.L."/>
            <person name="Ketley J.M."/>
            <person name="Churcher C.M."/>
            <person name="Basham D."/>
            <person name="Chillingworth T."/>
            <person name="Davies R.M."/>
            <person name="Feltwell T."/>
            <person name="Holroyd S."/>
            <person name="Jagels K."/>
            <person name="Karlyshev A.V."/>
            <person name="Moule S."/>
            <person name="Pallen M.J."/>
            <person name="Penn C.W."/>
            <person name="Quail M.A."/>
            <person name="Rajandream M.A."/>
            <person name="Rutherford K.M."/>
            <person name="van Vliet A.H.M."/>
            <person name="Whitehead S."/>
            <person name="Barrell B.G."/>
        </authorList>
    </citation>
    <scope>NUCLEOTIDE SEQUENCE [LARGE SCALE GENOMIC DNA]</scope>
    <source>
        <strain>ATCC 700819 / NCTC 11168</strain>
    </source>
</reference>
<proteinExistence type="inferred from homology"/>
<comment type="function">
    <text evidence="1">Catalyzes the first step in hexosamine metabolism, converting fructose-6P into glucosamine-6P using glutamine as a nitrogen source.</text>
</comment>
<comment type="catalytic activity">
    <reaction evidence="1">
        <text>D-fructose 6-phosphate + L-glutamine = D-glucosamine 6-phosphate + L-glutamate</text>
        <dbReference type="Rhea" id="RHEA:13237"/>
        <dbReference type="ChEBI" id="CHEBI:29985"/>
        <dbReference type="ChEBI" id="CHEBI:58359"/>
        <dbReference type="ChEBI" id="CHEBI:58725"/>
        <dbReference type="ChEBI" id="CHEBI:61527"/>
        <dbReference type="EC" id="2.6.1.16"/>
    </reaction>
</comment>
<comment type="subunit">
    <text evidence="1">Homodimer.</text>
</comment>
<comment type="subcellular location">
    <subcellularLocation>
        <location evidence="1">Cytoplasm</location>
    </subcellularLocation>
</comment>
<keyword id="KW-0032">Aminotransferase</keyword>
<keyword id="KW-0963">Cytoplasm</keyword>
<keyword id="KW-0315">Glutamine amidotransferase</keyword>
<keyword id="KW-1185">Reference proteome</keyword>
<keyword id="KW-0677">Repeat</keyword>
<keyword id="KW-0808">Transferase</keyword>
<name>GLMS_CAMJE</name>
<sequence length="598" mass="67188">MCGIVGYIGNNEKKQIILNGLKELEYRGYDSAGMAVMQEGELSFFKAVGKLENLANKCTDFESQGYGFAIGHTRWATHGKPTEINAHPHLGQYSCVIHNGIIENYKEIKDKLEKEGVSFLSQTDTEVIVQLFEFYARNLGVFEAWQKTIKELRGAFATLLVTKKDPNHVYFAKNAAPLIIGKNANKEWYFSSGDAPLIGSCDEVMYLEDLSLGYASKDELVVYENDILKSLCFSKLSGDKAYAKKDGFRFFMEKEIYEQSRVMSEVLMGRIQGDEVVFDELNNEDLSQVDEITLCACGTSYHAAMASAYLFERIAKVKAKVEIASEFRYREAIIKKDSLFIVISQSGETADTLEALKIAKEQGAKTFAICNVDNSNIVRLAHLSLLTRAGIEKGVASTKAFATQVLTLWMLAIFMAQKRNLNVSAEIKALLHTPNCVSVKQALHEKIHRLSKRYLDGHGFFFIGRDVFYPLALEGALKLKELSYLHAEGYPAGEMKHGPIALADSKLYTIALMPKHMLYEKTKSNVEELIARDSTVLSISPLEFDLSDDFIKTNEQDHYMCEFFEMMVITQLLAMEISIRLGNDVDMPRNLAKSVTVE</sequence>
<feature type="initiator methionine" description="Removed" evidence="1">
    <location>
        <position position="1"/>
    </location>
</feature>
<feature type="chain" id="PRO_0000135314" description="Glutamine--fructose-6-phosphate aminotransferase [isomerizing]">
    <location>
        <begin position="2"/>
        <end position="598"/>
    </location>
</feature>
<feature type="domain" description="Glutamine amidotransferase type-2" evidence="1">
    <location>
        <begin position="2"/>
        <end position="218"/>
    </location>
</feature>
<feature type="domain" description="SIS 1" evidence="1">
    <location>
        <begin position="277"/>
        <end position="421"/>
    </location>
</feature>
<feature type="domain" description="SIS 2" evidence="1">
    <location>
        <begin position="450"/>
        <end position="588"/>
    </location>
</feature>
<feature type="active site" description="Nucleophile; for GATase activity" evidence="1">
    <location>
        <position position="2"/>
    </location>
</feature>
<feature type="active site" description="For Fru-6P isomerization activity" evidence="1">
    <location>
        <position position="593"/>
    </location>
</feature>
<accession>Q9PMT4</accession>
<accession>Q0P8P3</accession>